<gene>
    <name type="ordered locus">XAC3064</name>
</gene>
<evidence type="ECO:0000255" key="1">
    <source>
        <dbReference type="HAMAP-Rule" id="MF_00010"/>
    </source>
</evidence>
<reference key="1">
    <citation type="journal article" date="2002" name="Nature">
        <title>Comparison of the genomes of two Xanthomonas pathogens with differing host specificities.</title>
        <authorList>
            <person name="da Silva A.C.R."/>
            <person name="Ferro J.A."/>
            <person name="Reinach F.C."/>
            <person name="Farah C.S."/>
            <person name="Furlan L.R."/>
            <person name="Quaggio R.B."/>
            <person name="Monteiro-Vitorello C.B."/>
            <person name="Van Sluys M.A."/>
            <person name="Almeida N.F. Jr."/>
            <person name="Alves L.M.C."/>
            <person name="do Amaral A.M."/>
            <person name="Bertolini M.C."/>
            <person name="Camargo L.E.A."/>
            <person name="Camarotte G."/>
            <person name="Cannavan F."/>
            <person name="Cardozo J."/>
            <person name="Chambergo F."/>
            <person name="Ciapina L.P."/>
            <person name="Cicarelli R.M.B."/>
            <person name="Coutinho L.L."/>
            <person name="Cursino-Santos J.R."/>
            <person name="El-Dorry H."/>
            <person name="Faria J.B."/>
            <person name="Ferreira A.J.S."/>
            <person name="Ferreira R.C.C."/>
            <person name="Ferro M.I.T."/>
            <person name="Formighieri E.F."/>
            <person name="Franco M.C."/>
            <person name="Greggio C.C."/>
            <person name="Gruber A."/>
            <person name="Katsuyama A.M."/>
            <person name="Kishi L.T."/>
            <person name="Leite R.P."/>
            <person name="Lemos E.G.M."/>
            <person name="Lemos M.V.F."/>
            <person name="Locali E.C."/>
            <person name="Machado M.A."/>
            <person name="Madeira A.M.B.N."/>
            <person name="Martinez-Rossi N.M."/>
            <person name="Martins E.C."/>
            <person name="Meidanis J."/>
            <person name="Menck C.F.M."/>
            <person name="Miyaki C.Y."/>
            <person name="Moon D.H."/>
            <person name="Moreira L.M."/>
            <person name="Novo M.T.M."/>
            <person name="Okura V.K."/>
            <person name="Oliveira M.C."/>
            <person name="Oliveira V.R."/>
            <person name="Pereira H.A."/>
            <person name="Rossi A."/>
            <person name="Sena J.A.D."/>
            <person name="Silva C."/>
            <person name="de Souza R.F."/>
            <person name="Spinola L.A.F."/>
            <person name="Takita M.A."/>
            <person name="Tamura R.E."/>
            <person name="Teixeira E.C."/>
            <person name="Tezza R.I.D."/>
            <person name="Trindade dos Santos M."/>
            <person name="Truffi D."/>
            <person name="Tsai S.M."/>
            <person name="White F.F."/>
            <person name="Setubal J.C."/>
            <person name="Kitajima J.P."/>
        </authorList>
    </citation>
    <scope>NUCLEOTIDE SEQUENCE [LARGE SCALE GENOMIC DNA]</scope>
    <source>
        <strain>306</strain>
    </source>
</reference>
<dbReference type="EMBL" id="AE008923">
    <property type="protein sequence ID" value="AAM37909.1"/>
    <property type="molecule type" value="Genomic_DNA"/>
</dbReference>
<dbReference type="RefSeq" id="WP_008572067.1">
    <property type="nucleotide sequence ID" value="NC_003919.1"/>
</dbReference>
<dbReference type="SMR" id="Q8PI34"/>
<dbReference type="KEGG" id="xac:XAC3064"/>
<dbReference type="eggNOG" id="COG1742">
    <property type="taxonomic scope" value="Bacteria"/>
</dbReference>
<dbReference type="HOGENOM" id="CLU_117653_2_0_6"/>
<dbReference type="Proteomes" id="UP000000576">
    <property type="component" value="Chromosome"/>
</dbReference>
<dbReference type="GO" id="GO:0005886">
    <property type="term" value="C:plasma membrane"/>
    <property type="evidence" value="ECO:0007669"/>
    <property type="project" value="UniProtKB-SubCell"/>
</dbReference>
<dbReference type="HAMAP" id="MF_00010">
    <property type="entry name" value="UPF0060"/>
    <property type="match status" value="1"/>
</dbReference>
<dbReference type="InterPro" id="IPR003844">
    <property type="entry name" value="UPF0060"/>
</dbReference>
<dbReference type="NCBIfam" id="NF002586">
    <property type="entry name" value="PRK02237.1"/>
    <property type="match status" value="1"/>
</dbReference>
<dbReference type="PANTHER" id="PTHR36116">
    <property type="entry name" value="UPF0060 MEMBRANE PROTEIN YNFA"/>
    <property type="match status" value="1"/>
</dbReference>
<dbReference type="PANTHER" id="PTHR36116:SF1">
    <property type="entry name" value="UPF0060 MEMBRANE PROTEIN YNFA"/>
    <property type="match status" value="1"/>
</dbReference>
<dbReference type="Pfam" id="PF02694">
    <property type="entry name" value="UPF0060"/>
    <property type="match status" value="1"/>
</dbReference>
<dbReference type="SUPFAM" id="SSF103481">
    <property type="entry name" value="Multidrug resistance efflux transporter EmrE"/>
    <property type="match status" value="1"/>
</dbReference>
<keyword id="KW-0997">Cell inner membrane</keyword>
<keyword id="KW-1003">Cell membrane</keyword>
<keyword id="KW-0472">Membrane</keyword>
<keyword id="KW-0812">Transmembrane</keyword>
<keyword id="KW-1133">Transmembrane helix</keyword>
<feature type="chain" id="PRO_0000162355" description="UPF0060 membrane protein XAC3064">
    <location>
        <begin position="1"/>
        <end position="111"/>
    </location>
</feature>
<feature type="transmembrane region" description="Helical" evidence="1">
    <location>
        <begin position="8"/>
        <end position="28"/>
    </location>
</feature>
<feature type="transmembrane region" description="Helical" evidence="1">
    <location>
        <begin position="32"/>
        <end position="52"/>
    </location>
</feature>
<feature type="transmembrane region" description="Helical" evidence="1">
    <location>
        <begin position="64"/>
        <end position="84"/>
    </location>
</feature>
<feature type="transmembrane region" description="Helical" evidence="1">
    <location>
        <begin position="91"/>
        <end position="111"/>
    </location>
</feature>
<comment type="subcellular location">
    <subcellularLocation>
        <location evidence="1">Cell inner membrane</location>
        <topology evidence="1">Multi-pass membrane protein</topology>
    </subcellularLocation>
</comment>
<comment type="similarity">
    <text evidence="1">Belongs to the UPF0060 family.</text>
</comment>
<accession>Q8PI34</accession>
<protein>
    <recommendedName>
        <fullName evidence="1">UPF0060 membrane protein XAC3064</fullName>
    </recommendedName>
</protein>
<sequence length="111" mass="12045">MTIAPTTLLLFAATALAELVGCYLPYLWLRKGGSVWLLLPTALSLAVFVWLLSLHPEASGRVYAAYGGVYIASALLWLWWVDGVTPTRWDLLGAACCLLGMAVIMFSPRSA</sequence>
<organism>
    <name type="scientific">Xanthomonas axonopodis pv. citri (strain 306)</name>
    <dbReference type="NCBI Taxonomy" id="190486"/>
    <lineage>
        <taxon>Bacteria</taxon>
        <taxon>Pseudomonadati</taxon>
        <taxon>Pseudomonadota</taxon>
        <taxon>Gammaproteobacteria</taxon>
        <taxon>Lysobacterales</taxon>
        <taxon>Lysobacteraceae</taxon>
        <taxon>Xanthomonas</taxon>
    </lineage>
</organism>
<name>Y3064_XANAC</name>
<proteinExistence type="inferred from homology"/>